<dbReference type="EC" id="2.7.8.7" evidence="1"/>
<dbReference type="EMBL" id="CP001348">
    <property type="protein sequence ID" value="ACL74418.1"/>
    <property type="molecule type" value="Genomic_DNA"/>
</dbReference>
<dbReference type="RefSeq" id="WP_012634485.1">
    <property type="nucleotide sequence ID" value="NC_011898.1"/>
</dbReference>
<dbReference type="SMR" id="B8I3U1"/>
<dbReference type="STRING" id="394503.Ccel_0030"/>
<dbReference type="KEGG" id="cce:Ccel_0030"/>
<dbReference type="eggNOG" id="COG0736">
    <property type="taxonomic scope" value="Bacteria"/>
</dbReference>
<dbReference type="HOGENOM" id="CLU_089696_0_2_9"/>
<dbReference type="OrthoDB" id="517356at2"/>
<dbReference type="Proteomes" id="UP000001349">
    <property type="component" value="Chromosome"/>
</dbReference>
<dbReference type="GO" id="GO:0005737">
    <property type="term" value="C:cytoplasm"/>
    <property type="evidence" value="ECO:0007669"/>
    <property type="project" value="UniProtKB-SubCell"/>
</dbReference>
<dbReference type="GO" id="GO:0008897">
    <property type="term" value="F:holo-[acyl-carrier-protein] synthase activity"/>
    <property type="evidence" value="ECO:0007669"/>
    <property type="project" value="UniProtKB-UniRule"/>
</dbReference>
<dbReference type="GO" id="GO:0000287">
    <property type="term" value="F:magnesium ion binding"/>
    <property type="evidence" value="ECO:0007669"/>
    <property type="project" value="UniProtKB-UniRule"/>
</dbReference>
<dbReference type="GO" id="GO:0006633">
    <property type="term" value="P:fatty acid biosynthetic process"/>
    <property type="evidence" value="ECO:0007669"/>
    <property type="project" value="UniProtKB-UniRule"/>
</dbReference>
<dbReference type="Gene3D" id="3.90.470.20">
    <property type="entry name" value="4'-phosphopantetheinyl transferase domain"/>
    <property type="match status" value="1"/>
</dbReference>
<dbReference type="HAMAP" id="MF_00101">
    <property type="entry name" value="AcpS"/>
    <property type="match status" value="1"/>
</dbReference>
<dbReference type="InterPro" id="IPR008278">
    <property type="entry name" value="4-PPantetheinyl_Trfase_dom"/>
</dbReference>
<dbReference type="InterPro" id="IPR037143">
    <property type="entry name" value="4-PPantetheinyl_Trfase_dom_sf"/>
</dbReference>
<dbReference type="InterPro" id="IPR002582">
    <property type="entry name" value="ACPS"/>
</dbReference>
<dbReference type="InterPro" id="IPR004568">
    <property type="entry name" value="Ppantetheine-prot_Trfase_dom"/>
</dbReference>
<dbReference type="NCBIfam" id="TIGR00516">
    <property type="entry name" value="acpS"/>
    <property type="match status" value="1"/>
</dbReference>
<dbReference type="NCBIfam" id="TIGR00556">
    <property type="entry name" value="pantethn_trn"/>
    <property type="match status" value="1"/>
</dbReference>
<dbReference type="Pfam" id="PF01648">
    <property type="entry name" value="ACPS"/>
    <property type="match status" value="1"/>
</dbReference>
<dbReference type="SUPFAM" id="SSF56214">
    <property type="entry name" value="4'-phosphopantetheinyl transferase"/>
    <property type="match status" value="1"/>
</dbReference>
<protein>
    <recommendedName>
        <fullName evidence="1">Holo-[acyl-carrier-protein] synthase</fullName>
        <shortName evidence="1">Holo-ACP synthase</shortName>
        <ecNumber evidence="1">2.7.8.7</ecNumber>
    </recommendedName>
    <alternativeName>
        <fullName evidence="1">4'-phosphopantetheinyl transferase AcpS</fullName>
    </alternativeName>
</protein>
<comment type="function">
    <text evidence="1">Transfers the 4'-phosphopantetheine moiety from coenzyme A to a Ser of acyl-carrier-protein.</text>
</comment>
<comment type="catalytic activity">
    <reaction evidence="1">
        <text>apo-[ACP] + CoA = holo-[ACP] + adenosine 3',5'-bisphosphate + H(+)</text>
        <dbReference type="Rhea" id="RHEA:12068"/>
        <dbReference type="Rhea" id="RHEA-COMP:9685"/>
        <dbReference type="Rhea" id="RHEA-COMP:9690"/>
        <dbReference type="ChEBI" id="CHEBI:15378"/>
        <dbReference type="ChEBI" id="CHEBI:29999"/>
        <dbReference type="ChEBI" id="CHEBI:57287"/>
        <dbReference type="ChEBI" id="CHEBI:58343"/>
        <dbReference type="ChEBI" id="CHEBI:64479"/>
        <dbReference type="EC" id="2.7.8.7"/>
    </reaction>
</comment>
<comment type="cofactor">
    <cofactor evidence="1">
        <name>Mg(2+)</name>
        <dbReference type="ChEBI" id="CHEBI:18420"/>
    </cofactor>
</comment>
<comment type="subcellular location">
    <subcellularLocation>
        <location evidence="1">Cytoplasm</location>
    </subcellularLocation>
</comment>
<comment type="similarity">
    <text evidence="1">Belongs to the P-Pant transferase superfamily. AcpS family.</text>
</comment>
<name>ACPS_RUMCH</name>
<feature type="chain" id="PRO_1000118804" description="Holo-[acyl-carrier-protein] synthase">
    <location>
        <begin position="1"/>
        <end position="134"/>
    </location>
</feature>
<feature type="binding site" evidence="1">
    <location>
        <position position="8"/>
    </location>
    <ligand>
        <name>Mg(2+)</name>
        <dbReference type="ChEBI" id="CHEBI:18420"/>
    </ligand>
</feature>
<feature type="binding site" evidence="1">
    <location>
        <position position="58"/>
    </location>
    <ligand>
        <name>Mg(2+)</name>
        <dbReference type="ChEBI" id="CHEBI:18420"/>
    </ligand>
</feature>
<proteinExistence type="inferred from homology"/>
<keyword id="KW-0963">Cytoplasm</keyword>
<keyword id="KW-0275">Fatty acid biosynthesis</keyword>
<keyword id="KW-0276">Fatty acid metabolism</keyword>
<keyword id="KW-0444">Lipid biosynthesis</keyword>
<keyword id="KW-0443">Lipid metabolism</keyword>
<keyword id="KW-0460">Magnesium</keyword>
<keyword id="KW-0479">Metal-binding</keyword>
<keyword id="KW-1185">Reference proteome</keyword>
<keyword id="KW-0808">Transferase</keyword>
<sequence>MEMLLGTDIIEVDRIKRAIENGGRKFSEKVFTLNEIEYCESRKAGKYQSYAARFAAKEAVSKAFGTGIGKNAAFSEIEILKDSLGKPYVRLSGKAKEFYDSLGTAGISVSLSHCRAYAVAYAVISLGDSFKNKI</sequence>
<accession>B8I3U1</accession>
<organism>
    <name type="scientific">Ruminiclostridium cellulolyticum (strain ATCC 35319 / DSM 5812 / JCM 6584 / H10)</name>
    <name type="common">Clostridium cellulolyticum</name>
    <dbReference type="NCBI Taxonomy" id="394503"/>
    <lineage>
        <taxon>Bacteria</taxon>
        <taxon>Bacillati</taxon>
        <taxon>Bacillota</taxon>
        <taxon>Clostridia</taxon>
        <taxon>Eubacteriales</taxon>
        <taxon>Oscillospiraceae</taxon>
        <taxon>Ruminiclostridium</taxon>
    </lineage>
</organism>
<reference key="1">
    <citation type="submission" date="2009-01" db="EMBL/GenBank/DDBJ databases">
        <title>Complete sequence of Clostridium cellulolyticum H10.</title>
        <authorList>
            <consortium name="US DOE Joint Genome Institute"/>
            <person name="Lucas S."/>
            <person name="Copeland A."/>
            <person name="Lapidus A."/>
            <person name="Glavina del Rio T."/>
            <person name="Dalin E."/>
            <person name="Tice H."/>
            <person name="Bruce D."/>
            <person name="Goodwin L."/>
            <person name="Pitluck S."/>
            <person name="Chertkov O."/>
            <person name="Saunders E."/>
            <person name="Brettin T."/>
            <person name="Detter J.C."/>
            <person name="Han C."/>
            <person name="Larimer F."/>
            <person name="Land M."/>
            <person name="Hauser L."/>
            <person name="Kyrpides N."/>
            <person name="Ivanova N."/>
            <person name="Zhou J."/>
            <person name="Richardson P."/>
        </authorList>
    </citation>
    <scope>NUCLEOTIDE SEQUENCE [LARGE SCALE GENOMIC DNA]</scope>
    <source>
        <strain>ATCC 35319 / DSM 5812 / JCM 6584 / H10</strain>
    </source>
</reference>
<evidence type="ECO:0000255" key="1">
    <source>
        <dbReference type="HAMAP-Rule" id="MF_00101"/>
    </source>
</evidence>
<gene>
    <name evidence="1" type="primary">acpS</name>
    <name type="ordered locus">Ccel_0030</name>
</gene>